<organism>
    <name type="scientific">Aspergillus fumigatus (strain ATCC MYA-4609 / CBS 101355 / FGSC A1100 / Af293)</name>
    <name type="common">Neosartorya fumigata</name>
    <dbReference type="NCBI Taxonomy" id="330879"/>
    <lineage>
        <taxon>Eukaryota</taxon>
        <taxon>Fungi</taxon>
        <taxon>Dikarya</taxon>
        <taxon>Ascomycota</taxon>
        <taxon>Pezizomycotina</taxon>
        <taxon>Eurotiomycetes</taxon>
        <taxon>Eurotiomycetidae</taxon>
        <taxon>Eurotiales</taxon>
        <taxon>Aspergillaceae</taxon>
        <taxon>Aspergillus</taxon>
        <taxon>Aspergillus subgen. Fumigati</taxon>
    </lineage>
</organism>
<reference key="1">
    <citation type="submission" date="2006-03" db="EMBL/GenBank/DDBJ databases">
        <title>Phosphoethanolamine transferases gene, Afpig7, which is involved in the biosynthesis of glycosylphosphatidylinositol in Aspergillus fumigatus YJ407.</title>
        <authorList>
            <person name="Ouyang H."/>
            <person name="Jin C."/>
        </authorList>
    </citation>
    <scope>NUCLEOTIDE SEQUENCE [MRNA]</scope>
    <source>
        <strain>YJ-407</strain>
    </source>
</reference>
<reference key="2">
    <citation type="journal article" date="2005" name="Nature">
        <title>Genomic sequence of the pathogenic and allergenic filamentous fungus Aspergillus fumigatus.</title>
        <authorList>
            <person name="Nierman W.C."/>
            <person name="Pain A."/>
            <person name="Anderson M.J."/>
            <person name="Wortman J.R."/>
            <person name="Kim H.S."/>
            <person name="Arroyo J."/>
            <person name="Berriman M."/>
            <person name="Abe K."/>
            <person name="Archer D.B."/>
            <person name="Bermejo C."/>
            <person name="Bennett J.W."/>
            <person name="Bowyer P."/>
            <person name="Chen D."/>
            <person name="Collins M."/>
            <person name="Coulsen R."/>
            <person name="Davies R."/>
            <person name="Dyer P.S."/>
            <person name="Farman M.L."/>
            <person name="Fedorova N."/>
            <person name="Fedorova N.D."/>
            <person name="Feldblyum T.V."/>
            <person name="Fischer R."/>
            <person name="Fosker N."/>
            <person name="Fraser A."/>
            <person name="Garcia J.L."/>
            <person name="Garcia M.J."/>
            <person name="Goble A."/>
            <person name="Goldman G.H."/>
            <person name="Gomi K."/>
            <person name="Griffith-Jones S."/>
            <person name="Gwilliam R."/>
            <person name="Haas B.J."/>
            <person name="Haas H."/>
            <person name="Harris D.E."/>
            <person name="Horiuchi H."/>
            <person name="Huang J."/>
            <person name="Humphray S."/>
            <person name="Jimenez J."/>
            <person name="Keller N."/>
            <person name="Khouri H."/>
            <person name="Kitamoto K."/>
            <person name="Kobayashi T."/>
            <person name="Konzack S."/>
            <person name="Kulkarni R."/>
            <person name="Kumagai T."/>
            <person name="Lafton A."/>
            <person name="Latge J.-P."/>
            <person name="Li W."/>
            <person name="Lord A."/>
            <person name="Lu C."/>
            <person name="Majoros W.H."/>
            <person name="May G.S."/>
            <person name="Miller B.L."/>
            <person name="Mohamoud Y."/>
            <person name="Molina M."/>
            <person name="Monod M."/>
            <person name="Mouyna I."/>
            <person name="Mulligan S."/>
            <person name="Murphy L.D."/>
            <person name="O'Neil S."/>
            <person name="Paulsen I."/>
            <person name="Penalva M.A."/>
            <person name="Pertea M."/>
            <person name="Price C."/>
            <person name="Pritchard B.L."/>
            <person name="Quail M.A."/>
            <person name="Rabbinowitsch E."/>
            <person name="Rawlins N."/>
            <person name="Rajandream M.A."/>
            <person name="Reichard U."/>
            <person name="Renauld H."/>
            <person name="Robson G.D."/>
            <person name="Rodriguez de Cordoba S."/>
            <person name="Rodriguez-Pena J.M."/>
            <person name="Ronning C.M."/>
            <person name="Rutter S."/>
            <person name="Salzberg S.L."/>
            <person name="Sanchez M."/>
            <person name="Sanchez-Ferrero J.C."/>
            <person name="Saunders D."/>
            <person name="Seeger K."/>
            <person name="Squares R."/>
            <person name="Squares S."/>
            <person name="Takeuchi M."/>
            <person name="Tekaia F."/>
            <person name="Turner G."/>
            <person name="Vazquez de Aldana C.R."/>
            <person name="Weidman J."/>
            <person name="White O."/>
            <person name="Woodward J.R."/>
            <person name="Yu J.-H."/>
            <person name="Fraser C.M."/>
            <person name="Galagan J.E."/>
            <person name="Asai K."/>
            <person name="Machida M."/>
            <person name="Hall N."/>
            <person name="Barrell B.G."/>
            <person name="Denning D.W."/>
        </authorList>
    </citation>
    <scope>NUCLEOTIDE SEQUENCE [LARGE SCALE GENOMIC DNA]</scope>
    <source>
        <strain>ATCC MYA-4609 / CBS 101355 / FGSC A1100 / Af293</strain>
    </source>
</reference>
<keyword id="KW-0256">Endoplasmic reticulum</keyword>
<keyword id="KW-0325">Glycoprotein</keyword>
<keyword id="KW-0337">GPI-anchor biosynthesis</keyword>
<keyword id="KW-0472">Membrane</keyword>
<keyword id="KW-1185">Reference proteome</keyword>
<keyword id="KW-0808">Transferase</keyword>
<keyword id="KW-0812">Transmembrane</keyword>
<keyword id="KW-1133">Transmembrane helix</keyword>
<protein>
    <recommendedName>
        <fullName>GPI ethanolamine phosphate transferase 2</fullName>
        <ecNumber>2.-.-.-</ecNumber>
    </recommendedName>
    <alternativeName>
        <fullName>Glycosylphosphatidylinositol-anchor biosynthesis protein 7</fullName>
    </alternativeName>
</protein>
<dbReference type="EC" id="2.-.-.-"/>
<dbReference type="EMBL" id="DQ426544">
    <property type="protein sequence ID" value="ABD84045.1"/>
    <property type="molecule type" value="mRNA"/>
</dbReference>
<dbReference type="EMBL" id="AAHF01000012">
    <property type="protein sequence ID" value="EAL85513.1"/>
    <property type="molecule type" value="Genomic_DNA"/>
</dbReference>
<dbReference type="RefSeq" id="XP_747551.1">
    <property type="nucleotide sequence ID" value="XM_742458.1"/>
</dbReference>
<dbReference type="SMR" id="Q4WDM5"/>
<dbReference type="FunCoup" id="Q4WDM5">
    <property type="interactions" value="470"/>
</dbReference>
<dbReference type="STRING" id="330879.Q4WDM5"/>
<dbReference type="GlyCosmos" id="Q4WDM5">
    <property type="glycosylation" value="4 sites, No reported glycans"/>
</dbReference>
<dbReference type="EnsemblFungi" id="EAL85513">
    <property type="protein sequence ID" value="EAL85513"/>
    <property type="gene ID" value="AFUA_6G05260"/>
</dbReference>
<dbReference type="GeneID" id="3504993"/>
<dbReference type="KEGG" id="afm:AFUA_6G05260"/>
<dbReference type="VEuPathDB" id="FungiDB:Afu6g05260"/>
<dbReference type="eggNOG" id="KOG2125">
    <property type="taxonomic scope" value="Eukaryota"/>
</dbReference>
<dbReference type="HOGENOM" id="CLU_004770_0_0_1"/>
<dbReference type="InParanoid" id="Q4WDM5"/>
<dbReference type="OMA" id="SWNQTGQ"/>
<dbReference type="OrthoDB" id="272139at2759"/>
<dbReference type="UniPathway" id="UPA00196"/>
<dbReference type="PHI-base" id="PHI:12023"/>
<dbReference type="Proteomes" id="UP000002530">
    <property type="component" value="Chromosome 6"/>
</dbReference>
<dbReference type="GO" id="GO:0005789">
    <property type="term" value="C:endoplasmic reticulum membrane"/>
    <property type="evidence" value="ECO:0000318"/>
    <property type="project" value="GO_Central"/>
</dbReference>
<dbReference type="GO" id="GO:0005886">
    <property type="term" value="C:plasma membrane"/>
    <property type="evidence" value="ECO:0007669"/>
    <property type="project" value="EnsemblFungi"/>
</dbReference>
<dbReference type="GO" id="GO:0051267">
    <property type="term" value="F:CP2 mannose-ethanolamine phosphotransferase activity"/>
    <property type="evidence" value="ECO:0000318"/>
    <property type="project" value="GO_Central"/>
</dbReference>
<dbReference type="GO" id="GO:0006506">
    <property type="term" value="P:GPI anchor biosynthetic process"/>
    <property type="evidence" value="ECO:0000318"/>
    <property type="project" value="GO_Central"/>
</dbReference>
<dbReference type="CDD" id="cd16024">
    <property type="entry name" value="GPI_EPT_2"/>
    <property type="match status" value="1"/>
</dbReference>
<dbReference type="FunFam" id="3.40.720.10:FF:000045">
    <property type="entry name" value="GPI ethanolamine phosphate transferase 2"/>
    <property type="match status" value="1"/>
</dbReference>
<dbReference type="Gene3D" id="3.40.720.10">
    <property type="entry name" value="Alkaline Phosphatase, subunit A"/>
    <property type="match status" value="1"/>
</dbReference>
<dbReference type="InterPro" id="IPR017850">
    <property type="entry name" value="Alkaline_phosphatase_core_sf"/>
</dbReference>
<dbReference type="InterPro" id="IPR002591">
    <property type="entry name" value="Phosphodiest/P_Trfase"/>
</dbReference>
<dbReference type="InterPro" id="IPR037674">
    <property type="entry name" value="PIG-G_N"/>
</dbReference>
<dbReference type="InterPro" id="IPR039527">
    <property type="entry name" value="PIGG/GPI7"/>
</dbReference>
<dbReference type="InterPro" id="IPR045687">
    <property type="entry name" value="PIGG/GPI7_C"/>
</dbReference>
<dbReference type="PANTHER" id="PTHR23072:SF0">
    <property type="entry name" value="GPI ETHANOLAMINE PHOSPHATE TRANSFERASE 2"/>
    <property type="match status" value="1"/>
</dbReference>
<dbReference type="PANTHER" id="PTHR23072">
    <property type="entry name" value="PHOSPHATIDYLINOSITOL GLYCAN-RELATED"/>
    <property type="match status" value="1"/>
</dbReference>
<dbReference type="Pfam" id="PF01663">
    <property type="entry name" value="Phosphodiest"/>
    <property type="match status" value="1"/>
</dbReference>
<dbReference type="Pfam" id="PF19316">
    <property type="entry name" value="PIGO_PIGG"/>
    <property type="match status" value="2"/>
</dbReference>
<dbReference type="SUPFAM" id="SSF53649">
    <property type="entry name" value="Alkaline phosphatase-like"/>
    <property type="match status" value="1"/>
</dbReference>
<accession>Q4WDM5</accession>
<proteinExistence type="evidence at transcript level"/>
<name>GPI7_ASPFU</name>
<comment type="function">
    <text evidence="1">Ethanolamine phosphate transferase involved in glycosylphosphatidylinositol-anchor biosynthesis. Transfers ethanolamine phosphate to the GPI second mannose (By similarity).</text>
</comment>
<comment type="pathway">
    <text>Glycolipid biosynthesis; glycosylphosphatidylinositol-anchor biosynthesis.</text>
</comment>
<comment type="subcellular location">
    <subcellularLocation>
        <location evidence="1">Endoplasmic reticulum membrane</location>
        <topology evidence="1">Multi-pass membrane protein</topology>
    </subcellularLocation>
</comment>
<comment type="similarity">
    <text evidence="3">Belongs to the PIGG/PIGN/PIGO family. PIGG subfamily.</text>
</comment>
<evidence type="ECO:0000250" key="1"/>
<evidence type="ECO:0000255" key="2"/>
<evidence type="ECO:0000305" key="3"/>
<sequence>MAFKGEHRAILIANILIVVAISIFSSGFFPYKSLLPGLATFAETNIGTVAPKVFDRVIFMVIDALRSDFVYSKTSGFSFTQSLIRSGAALPFTAHASSPTVTMPRLKAMTTGSVPSFLDVILNIAESDTSSTLAYQDTWLAQIKAQGGQLVMYGDDTWIKLFPGVFDRCDGTTSFFVSDFTEVDHNVTRHVPRELSERDWSAFIMHFLGLDHIGHKAGPKSRHMMTKQREMDSIVALIYAAMEEQEHLQSTLFVLCGDHGMNDAGNHGGSSPGEISPALLFISPKFQTKTTPEDSPVEAFSDLQYYRTVEQVDITPTLAGLLGLPIPLNSLGVFIPEFLMMWDNDAHRIDILLRNAKQMLSAMKGTFPDLDVEAITPPHGCDKHVLRSAQDVMSSTASKYNTTRLYLGLFVAALAVLLSFFPAYGLGSKYSYAVTFLMLIIISYGGMMFASSYVEEEQQFWYWVVTAWTVYLHIKSLRPWHGSKDTRRWNQTGQKFAAEPDIARDFFPRHQNILWALIILTYFDTCMHLCLNSHSSNIWRSAAILTTIAAFFFKLVFVASDSPELLYESLLSPIQKSLEEMPLVPPARLSKAVNIPIFLMFRLQAIILDFLKMSAIEVTLTSLLSQNMTFFAFGGSNAISSVDLSNAYNGIGSYSVVLVGVLTFISNWAGPIWWASAARLLYSNPTFAERYGQRTLLTFHAATSLMSVMAACTMLRTHLFIWTVFSPKYLYTLAWTILNHMFINLPATANVSQVLNWQYAFHSVACR</sequence>
<feature type="chain" id="PRO_0000246187" description="GPI ethanolamine phosphate transferase 2">
    <location>
        <begin position="1"/>
        <end position="767"/>
    </location>
</feature>
<feature type="transmembrane region" description="Helical" evidence="2">
    <location>
        <begin position="407"/>
        <end position="427"/>
    </location>
</feature>
<feature type="transmembrane region" description="Helical" evidence="2">
    <location>
        <begin position="434"/>
        <end position="454"/>
    </location>
</feature>
<feature type="transmembrane region" description="Helical" evidence="2">
    <location>
        <begin position="513"/>
        <end position="533"/>
    </location>
</feature>
<feature type="transmembrane region" description="Helical" evidence="2">
    <location>
        <begin position="538"/>
        <end position="558"/>
    </location>
</feature>
<feature type="transmembrane region" description="Helical" evidence="2">
    <location>
        <begin position="595"/>
        <end position="615"/>
    </location>
</feature>
<feature type="transmembrane region" description="Helical" evidence="2">
    <location>
        <begin position="655"/>
        <end position="675"/>
    </location>
</feature>
<feature type="transmembrane region" description="Helical" evidence="2">
    <location>
        <begin position="695"/>
        <end position="715"/>
    </location>
</feature>
<feature type="transmembrane region" description="Helical" evidence="2">
    <location>
        <begin position="733"/>
        <end position="755"/>
    </location>
</feature>
<feature type="glycosylation site" description="N-linked (GlcNAc...) asparagine" evidence="2">
    <location>
        <position position="186"/>
    </location>
</feature>
<feature type="glycosylation site" description="N-linked (GlcNAc...) asparagine" evidence="2">
    <location>
        <position position="401"/>
    </location>
</feature>
<feature type="glycosylation site" description="N-linked (GlcNAc...) asparagine" evidence="2">
    <location>
        <position position="490"/>
    </location>
</feature>
<feature type="glycosylation site" description="N-linked (GlcNAc...) asparagine" evidence="2">
    <location>
        <position position="627"/>
    </location>
</feature>
<gene>
    <name type="primary">las21</name>
    <name type="synonym">gpi7</name>
    <name type="ORF">AFUA_6G05260</name>
</gene>